<accession>Q5FLW2</accession>
<gene>
    <name evidence="1" type="primary">mutS2</name>
    <name evidence="1" type="synonym">rqcU</name>
    <name type="ordered locus">LBA0421</name>
</gene>
<comment type="function">
    <text evidence="1">Endonuclease that is involved in the suppression of homologous recombination and thus may have a key role in the control of bacterial genetic diversity.</text>
</comment>
<comment type="function">
    <text evidence="1">Acts as a ribosome collision sensor, splitting the ribosome into its 2 subunits. Detects stalled/collided 70S ribosomes which it binds and splits by an ATP-hydrolysis driven conformational change. Acts upstream of the ribosome quality control system (RQC), a ribosome-associated complex that mediates the extraction of incompletely synthesized nascent chains from stalled ribosomes and their subsequent degradation. Probably generates substrates for RQC.</text>
</comment>
<comment type="subunit">
    <text evidence="1">Homodimer. Binds to stalled ribosomes, contacting rRNA.</text>
</comment>
<comment type="similarity">
    <text evidence="1">Belongs to the DNA mismatch repair MutS family. MutS2 subfamily.</text>
</comment>
<feature type="chain" id="PRO_1000093360" description="Endonuclease MutS2">
    <location>
        <begin position="1"/>
        <end position="785"/>
    </location>
</feature>
<feature type="domain" description="Smr" evidence="1">
    <location>
        <begin position="710"/>
        <end position="785"/>
    </location>
</feature>
<feature type="binding site" evidence="1">
    <location>
        <begin position="333"/>
        <end position="340"/>
    </location>
    <ligand>
        <name>ATP</name>
        <dbReference type="ChEBI" id="CHEBI:30616"/>
    </ligand>
</feature>
<dbReference type="EC" id="3.1.-.-" evidence="1"/>
<dbReference type="EC" id="3.6.4.-" evidence="1"/>
<dbReference type="EMBL" id="CP000033">
    <property type="protein sequence ID" value="AAV42312.1"/>
    <property type="molecule type" value="Genomic_DNA"/>
</dbReference>
<dbReference type="RefSeq" id="WP_003549197.1">
    <property type="nucleotide sequence ID" value="NC_006814.3"/>
</dbReference>
<dbReference type="RefSeq" id="YP_193343.1">
    <property type="nucleotide sequence ID" value="NC_006814.3"/>
</dbReference>
<dbReference type="SMR" id="Q5FLW2"/>
<dbReference type="STRING" id="272621.LBA0421"/>
<dbReference type="KEGG" id="lac:LBA0421"/>
<dbReference type="PATRIC" id="fig|272621.13.peg.406"/>
<dbReference type="eggNOG" id="COG1193">
    <property type="taxonomic scope" value="Bacteria"/>
</dbReference>
<dbReference type="HOGENOM" id="CLU_011252_2_1_9"/>
<dbReference type="OrthoDB" id="9808166at2"/>
<dbReference type="BioCyc" id="LACI272621:G1G49-415-MONOMER"/>
<dbReference type="Proteomes" id="UP000006381">
    <property type="component" value="Chromosome"/>
</dbReference>
<dbReference type="GO" id="GO:0005524">
    <property type="term" value="F:ATP binding"/>
    <property type="evidence" value="ECO:0007669"/>
    <property type="project" value="UniProtKB-UniRule"/>
</dbReference>
<dbReference type="GO" id="GO:0016887">
    <property type="term" value="F:ATP hydrolysis activity"/>
    <property type="evidence" value="ECO:0007669"/>
    <property type="project" value="InterPro"/>
</dbReference>
<dbReference type="GO" id="GO:0140664">
    <property type="term" value="F:ATP-dependent DNA damage sensor activity"/>
    <property type="evidence" value="ECO:0007669"/>
    <property type="project" value="InterPro"/>
</dbReference>
<dbReference type="GO" id="GO:0004519">
    <property type="term" value="F:endonuclease activity"/>
    <property type="evidence" value="ECO:0007669"/>
    <property type="project" value="UniProtKB-UniRule"/>
</dbReference>
<dbReference type="GO" id="GO:0030983">
    <property type="term" value="F:mismatched DNA binding"/>
    <property type="evidence" value="ECO:0007669"/>
    <property type="project" value="InterPro"/>
</dbReference>
<dbReference type="GO" id="GO:0043023">
    <property type="term" value="F:ribosomal large subunit binding"/>
    <property type="evidence" value="ECO:0007669"/>
    <property type="project" value="UniProtKB-UniRule"/>
</dbReference>
<dbReference type="GO" id="GO:0019843">
    <property type="term" value="F:rRNA binding"/>
    <property type="evidence" value="ECO:0007669"/>
    <property type="project" value="UniProtKB-UniRule"/>
</dbReference>
<dbReference type="GO" id="GO:0006298">
    <property type="term" value="P:mismatch repair"/>
    <property type="evidence" value="ECO:0007669"/>
    <property type="project" value="InterPro"/>
</dbReference>
<dbReference type="GO" id="GO:0045910">
    <property type="term" value="P:negative regulation of DNA recombination"/>
    <property type="evidence" value="ECO:0007669"/>
    <property type="project" value="InterPro"/>
</dbReference>
<dbReference type="GO" id="GO:0072344">
    <property type="term" value="P:rescue of stalled ribosome"/>
    <property type="evidence" value="ECO:0007669"/>
    <property type="project" value="UniProtKB-UniRule"/>
</dbReference>
<dbReference type="CDD" id="cd03280">
    <property type="entry name" value="ABC_MutS2"/>
    <property type="match status" value="1"/>
</dbReference>
<dbReference type="FunFam" id="3.40.50.300:FF:000830">
    <property type="entry name" value="Endonuclease MutS2"/>
    <property type="match status" value="1"/>
</dbReference>
<dbReference type="Gene3D" id="3.30.1370.110">
    <property type="match status" value="1"/>
</dbReference>
<dbReference type="Gene3D" id="3.40.50.300">
    <property type="entry name" value="P-loop containing nucleotide triphosphate hydrolases"/>
    <property type="match status" value="1"/>
</dbReference>
<dbReference type="HAMAP" id="MF_00092">
    <property type="entry name" value="MutS2"/>
    <property type="match status" value="1"/>
</dbReference>
<dbReference type="InterPro" id="IPR000432">
    <property type="entry name" value="DNA_mismatch_repair_MutS_C"/>
</dbReference>
<dbReference type="InterPro" id="IPR007696">
    <property type="entry name" value="DNA_mismatch_repair_MutS_core"/>
</dbReference>
<dbReference type="InterPro" id="IPR036187">
    <property type="entry name" value="DNA_mismatch_repair_MutS_sf"/>
</dbReference>
<dbReference type="InterPro" id="IPR046893">
    <property type="entry name" value="MSSS"/>
</dbReference>
<dbReference type="InterPro" id="IPR045076">
    <property type="entry name" value="MutS"/>
</dbReference>
<dbReference type="InterPro" id="IPR005747">
    <property type="entry name" value="MutS2"/>
</dbReference>
<dbReference type="InterPro" id="IPR027417">
    <property type="entry name" value="P-loop_NTPase"/>
</dbReference>
<dbReference type="InterPro" id="IPR002625">
    <property type="entry name" value="Smr_dom"/>
</dbReference>
<dbReference type="InterPro" id="IPR036063">
    <property type="entry name" value="Smr_dom_sf"/>
</dbReference>
<dbReference type="NCBIfam" id="TIGR01069">
    <property type="entry name" value="mutS2"/>
    <property type="match status" value="1"/>
</dbReference>
<dbReference type="PANTHER" id="PTHR48466:SF2">
    <property type="entry name" value="OS10G0509000 PROTEIN"/>
    <property type="match status" value="1"/>
</dbReference>
<dbReference type="PANTHER" id="PTHR48466">
    <property type="entry name" value="OS10G0509000 PROTEIN-RELATED"/>
    <property type="match status" value="1"/>
</dbReference>
<dbReference type="Pfam" id="PF20297">
    <property type="entry name" value="MSSS"/>
    <property type="match status" value="1"/>
</dbReference>
<dbReference type="Pfam" id="PF00488">
    <property type="entry name" value="MutS_V"/>
    <property type="match status" value="1"/>
</dbReference>
<dbReference type="Pfam" id="PF01713">
    <property type="entry name" value="Smr"/>
    <property type="match status" value="1"/>
</dbReference>
<dbReference type="PIRSF" id="PIRSF005814">
    <property type="entry name" value="MutS_YshD"/>
    <property type="match status" value="1"/>
</dbReference>
<dbReference type="SMART" id="SM00534">
    <property type="entry name" value="MUTSac"/>
    <property type="match status" value="1"/>
</dbReference>
<dbReference type="SMART" id="SM00533">
    <property type="entry name" value="MUTSd"/>
    <property type="match status" value="1"/>
</dbReference>
<dbReference type="SMART" id="SM00463">
    <property type="entry name" value="SMR"/>
    <property type="match status" value="1"/>
</dbReference>
<dbReference type="SUPFAM" id="SSF48334">
    <property type="entry name" value="DNA repair protein MutS, domain III"/>
    <property type="match status" value="1"/>
</dbReference>
<dbReference type="SUPFAM" id="SSF52540">
    <property type="entry name" value="P-loop containing nucleoside triphosphate hydrolases"/>
    <property type="match status" value="1"/>
</dbReference>
<dbReference type="SUPFAM" id="SSF160443">
    <property type="entry name" value="SMR domain-like"/>
    <property type="match status" value="1"/>
</dbReference>
<dbReference type="PROSITE" id="PS00486">
    <property type="entry name" value="DNA_MISMATCH_REPAIR_2"/>
    <property type="match status" value="1"/>
</dbReference>
<dbReference type="PROSITE" id="PS50828">
    <property type="entry name" value="SMR"/>
    <property type="match status" value="1"/>
</dbReference>
<proteinExistence type="inferred from homology"/>
<keyword id="KW-0067">ATP-binding</keyword>
<keyword id="KW-0238">DNA-binding</keyword>
<keyword id="KW-0255">Endonuclease</keyword>
<keyword id="KW-0378">Hydrolase</keyword>
<keyword id="KW-0540">Nuclease</keyword>
<keyword id="KW-0547">Nucleotide-binding</keyword>
<keyword id="KW-1185">Reference proteome</keyword>
<keyword id="KW-0694">RNA-binding</keyword>
<keyword id="KW-0699">rRNA-binding</keyword>
<name>MUTS2_LACAC</name>
<organism>
    <name type="scientific">Lactobacillus acidophilus (strain ATCC 700396 / NCK56 / N2 / NCFM)</name>
    <dbReference type="NCBI Taxonomy" id="272621"/>
    <lineage>
        <taxon>Bacteria</taxon>
        <taxon>Bacillati</taxon>
        <taxon>Bacillota</taxon>
        <taxon>Bacilli</taxon>
        <taxon>Lactobacillales</taxon>
        <taxon>Lactobacillaceae</taxon>
        <taxon>Lactobacillus</taxon>
    </lineage>
</organism>
<evidence type="ECO:0000255" key="1">
    <source>
        <dbReference type="HAMAP-Rule" id="MF_00092"/>
    </source>
</evidence>
<protein>
    <recommendedName>
        <fullName evidence="1">Endonuclease MutS2</fullName>
        <ecNumber evidence="1">3.1.-.-</ecNumber>
    </recommendedName>
    <alternativeName>
        <fullName evidence="1">Ribosome-associated protein quality control-upstream factor</fullName>
        <shortName evidence="1">RQC-upstream factor</shortName>
        <shortName evidence="1">RqcU</shortName>
        <ecNumber evidence="1">3.6.4.-</ecNumber>
    </alternativeName>
</protein>
<reference key="1">
    <citation type="journal article" date="2005" name="Proc. Natl. Acad. Sci. U.S.A.">
        <title>Complete genome sequence of the probiotic lactic acid bacterium Lactobacillus acidophilus NCFM.</title>
        <authorList>
            <person name="Altermann E."/>
            <person name="Russell W.M."/>
            <person name="Azcarate-Peril M.A."/>
            <person name="Barrangou R."/>
            <person name="Buck B.L."/>
            <person name="McAuliffe O."/>
            <person name="Souther N."/>
            <person name="Dobson A."/>
            <person name="Duong T."/>
            <person name="Callanan M."/>
            <person name="Lick S."/>
            <person name="Hamrick A."/>
            <person name="Cano R."/>
            <person name="Klaenhammer T.R."/>
        </authorList>
    </citation>
    <scope>NUCLEOTIDE SEQUENCE [LARGE SCALE GENOMIC DNA]</scope>
    <source>
        <strain>ATCC 700396 / NCK56 / N2 / NCFM</strain>
    </source>
</reference>
<sequence length="785" mass="88146">MNNKILKILEFGEITDRLGALAITSPAKERAEKLLPSSDFDQVQNDIKQTLALTNLLRIKGQLPLTNFKDVRPSTKRLGVKANLNAQELGNLLLVLSLAQEINEFLEDVDEKVDLTIIDPILDQLDVPDLLFRELKKSIDYDGEVLDTASSELARLRHDIASNEEDIKNRMTTYTKGNSSKYLSEQIVTIRDDRYVIPVKQEYRAKFGGVVHDQSASGQTLFVEPEAVLNLNNRQQNLIAKEKQEIRNILKHLSNIAREDIDSLNNIASALTSLDFLQAKAKLAKEMKASEPKLTKDHSLNLRNARHPLINPEKVVPNNIRLGGDFDTMLITGPNTGGKTITLKTAGLLQLMAQSGLFIPAEEDSQVGVFEQIYADIGDEQSIEQSLSTFSSHMNDIIAIMKNVNSETLVLIDEIGAGTDPEEGASLAISILDFLRKKDAKIMVTTHYPELKLYGYNRPRTTNASMEFDLKTLSPTYRLQIGIPGHSNAFAIARRLGMREDVVKNAQELMSDEDSDINKMIAKLNAQTKAATTARNRLETSLDRSQKLEQKLQQALDWYNQRVQKQLDFAQERANEIIAKRRKKADKIIEQLEQQKNVGIKENKIIEAKGELNSLERQANNLAHNKVLQREKRRHHVSIGDRVKVLSYGQTGTITKQLSEHEYEVQMGIIKVKVSDRDVERIDNSQSTAKPKRLVRATSAVRRSNAHSELDLRGQRYDEAMTNLDRYIDSVLLAGLDTVTIIHGIGTGAIRKGVWQYLRSSNHVKNFNYAPANEGGNGATIVQLK</sequence>